<name>GUN1_MYCMD</name>
<sequence length="393" mass="39594">MAFKLNIGLLALSLSLSLVHLDGVRAGMATRYWDCCLASASWEGKAPVYAPVDACKADGVTLIDSKKDPSGQSGCNGGNKFMCSCMQPFDDETDPTLAFGFGAFTTGQESDTDCACFYAEFEHDAQGKAMKRNKLIFQVTNVGGDVQSQNFDFQIPGGGLGAFPKGCPAQWGVEASLWGDQYGGVKSATECSKLPKPLQEGCKWRFSEWGDNPVLKGSPKRVKCPKSLIDRSGCQRKDDNTISPYSGKVDSANTAAPAQYKRDRSVCLAGGKKGKSAAGGVDGSGDASGGADASGAGGAAEGSQGQPEGYGQPSGGNDQGSSNGDATTGAGSGSGSDSGSTANGSGSGAPTSGSDGSAVAPPSGGSNPGAAQGGQGGAQPGPSGGHKKCHKKH</sequence>
<organism>
    <name type="scientific">Mycosarcoma maydis</name>
    <name type="common">Corn smut fungus</name>
    <name type="synonym">Ustilago maydis</name>
    <dbReference type="NCBI Taxonomy" id="5270"/>
    <lineage>
        <taxon>Eukaryota</taxon>
        <taxon>Fungi</taxon>
        <taxon>Dikarya</taxon>
        <taxon>Basidiomycota</taxon>
        <taxon>Ustilaginomycotina</taxon>
        <taxon>Ustilaginomycetes</taxon>
        <taxon>Ustilaginales</taxon>
        <taxon>Ustilaginaceae</taxon>
        <taxon>Mycosarcoma</taxon>
    </lineage>
</organism>
<proteinExistence type="evidence at transcript level"/>
<gene>
    <name type="primary">EGL1</name>
    <name type="ORF">UMAG_06332</name>
</gene>
<protein>
    <recommendedName>
        <fullName>Endoglucanase 1</fullName>
        <ecNumber>3.2.1.4</ecNumber>
    </recommendedName>
    <alternativeName>
        <fullName>Cellulase 1</fullName>
    </alternativeName>
    <alternativeName>
        <fullName>Endo-1,4-beta-glucanase 1</fullName>
        <shortName>EG 1</shortName>
    </alternativeName>
</protein>
<feature type="signal peptide" evidence="2">
    <location>
        <begin position="1"/>
        <end position="26"/>
    </location>
</feature>
<feature type="chain" id="PRO_0000008025" description="Endoglucanase 1">
    <location>
        <begin position="27"/>
        <end position="393"/>
    </location>
</feature>
<feature type="region of interest" description="Disordered" evidence="4">
    <location>
        <begin position="233"/>
        <end position="393"/>
    </location>
</feature>
<feature type="compositionally biased region" description="Low complexity" evidence="4">
    <location>
        <begin position="319"/>
        <end position="329"/>
    </location>
</feature>
<feature type="compositionally biased region" description="Low complexity" evidence="4">
    <location>
        <begin position="337"/>
        <end position="370"/>
    </location>
</feature>
<feature type="compositionally biased region" description="Gly residues" evidence="4">
    <location>
        <begin position="371"/>
        <end position="384"/>
    </location>
</feature>
<feature type="active site" description="Nucleophile" evidence="3">
    <location>
        <position position="34"/>
    </location>
</feature>
<feature type="active site" description="Proton donor" evidence="1">
    <location>
        <position position="152"/>
    </location>
</feature>
<feature type="glycosylation site" description="N-linked (GlcNAc...) asparagine" evidence="2">
    <location>
        <position position="343"/>
    </location>
</feature>
<keyword id="KW-0119">Carbohydrate metabolism</keyword>
<keyword id="KW-0136">Cellulose degradation</keyword>
<keyword id="KW-0325">Glycoprotein</keyword>
<keyword id="KW-0326">Glycosidase</keyword>
<keyword id="KW-0378">Hydrolase</keyword>
<keyword id="KW-0624">Polysaccharide degradation</keyword>
<keyword id="KW-1185">Reference proteome</keyword>
<keyword id="KW-0964">Secreted</keyword>
<keyword id="KW-0732">Signal</keyword>
<reference key="1">
    <citation type="journal article" date="1995" name="Biol. Chem. Hoppe-Seyler">
        <title>Filament-specific expression of a cellulase gene in the dimorphic fungus Ustilago maydis.</title>
        <authorList>
            <person name="Schauwecker F."/>
            <person name="Wanner G."/>
            <person name="Kahmann R."/>
        </authorList>
    </citation>
    <scope>NUCLEOTIDE SEQUENCE [GENOMIC DNA]</scope>
    <source>
        <strain>FBD11</strain>
    </source>
</reference>
<reference key="2">
    <citation type="journal article" date="2006" name="Nature">
        <title>Insights from the genome of the biotrophic fungal plant pathogen Ustilago maydis.</title>
        <authorList>
            <person name="Kaemper J."/>
            <person name="Kahmann R."/>
            <person name="Boelker M."/>
            <person name="Ma L.-J."/>
            <person name="Brefort T."/>
            <person name="Saville B.J."/>
            <person name="Banuett F."/>
            <person name="Kronstad J.W."/>
            <person name="Gold S.E."/>
            <person name="Mueller O."/>
            <person name="Perlin M.H."/>
            <person name="Woesten H.A.B."/>
            <person name="de Vries R."/>
            <person name="Ruiz-Herrera J."/>
            <person name="Reynaga-Pena C.G."/>
            <person name="Snetselaar K."/>
            <person name="McCann M."/>
            <person name="Perez-Martin J."/>
            <person name="Feldbruegge M."/>
            <person name="Basse C.W."/>
            <person name="Steinberg G."/>
            <person name="Ibeas J.I."/>
            <person name="Holloman W."/>
            <person name="Guzman P."/>
            <person name="Farman M.L."/>
            <person name="Stajich J.E."/>
            <person name="Sentandreu R."/>
            <person name="Gonzalez-Prieto J.M."/>
            <person name="Kennell J.C."/>
            <person name="Molina L."/>
            <person name="Schirawski J."/>
            <person name="Mendoza-Mendoza A."/>
            <person name="Greilinger D."/>
            <person name="Muench K."/>
            <person name="Roessel N."/>
            <person name="Scherer M."/>
            <person name="Vranes M."/>
            <person name="Ladendorf O."/>
            <person name="Vincon V."/>
            <person name="Fuchs U."/>
            <person name="Sandrock B."/>
            <person name="Meng S."/>
            <person name="Ho E.C.H."/>
            <person name="Cahill M.J."/>
            <person name="Boyce K.J."/>
            <person name="Klose J."/>
            <person name="Klosterman S.J."/>
            <person name="Deelstra H.J."/>
            <person name="Ortiz-Castellanos L."/>
            <person name="Li W."/>
            <person name="Sanchez-Alonso P."/>
            <person name="Schreier P.H."/>
            <person name="Haeuser-Hahn I."/>
            <person name="Vaupel M."/>
            <person name="Koopmann E."/>
            <person name="Friedrich G."/>
            <person name="Voss H."/>
            <person name="Schlueter T."/>
            <person name="Margolis J."/>
            <person name="Platt D."/>
            <person name="Swimmer C."/>
            <person name="Gnirke A."/>
            <person name="Chen F."/>
            <person name="Vysotskaia V."/>
            <person name="Mannhaupt G."/>
            <person name="Gueldener U."/>
            <person name="Muensterkoetter M."/>
            <person name="Haase D."/>
            <person name="Oesterheld M."/>
            <person name="Mewes H.-W."/>
            <person name="Mauceli E.W."/>
            <person name="DeCaprio D."/>
            <person name="Wade C.M."/>
            <person name="Butler J."/>
            <person name="Young S.K."/>
            <person name="Jaffe D.B."/>
            <person name="Calvo S.E."/>
            <person name="Nusbaum C."/>
            <person name="Galagan J.E."/>
            <person name="Birren B.W."/>
        </authorList>
    </citation>
    <scope>NUCLEOTIDE SEQUENCE [LARGE SCALE GENOMIC DNA]</scope>
    <source>
        <strain>DSM 14603 / FGSC 9021 / UM521</strain>
    </source>
</reference>
<reference key="3">
    <citation type="submission" date="2014-09" db="EMBL/GenBank/DDBJ databases">
        <authorList>
            <person name="Gueldener U."/>
            <person name="Muensterkoetter M."/>
            <person name="Walter M.C."/>
            <person name="Mannhaupt G."/>
            <person name="Kahmann R."/>
        </authorList>
    </citation>
    <scope>GENOME REANNOTATION</scope>
    <source>
        <strain>DSM 14603 / FGSC 9021 / UM521</strain>
    </source>
</reference>
<evidence type="ECO:0000250" key="1"/>
<evidence type="ECO:0000255" key="2"/>
<evidence type="ECO:0000255" key="3">
    <source>
        <dbReference type="PROSITE-ProRule" id="PRU10069"/>
    </source>
</evidence>
<evidence type="ECO:0000256" key="4">
    <source>
        <dbReference type="SAM" id="MobiDB-lite"/>
    </source>
</evidence>
<evidence type="ECO:0000305" key="5"/>
<accession>P54424</accession>
<accession>A0A0D1CA77</accession>
<accession>Q4P0N1</accession>
<dbReference type="EC" id="3.2.1.4"/>
<dbReference type="EMBL" id="S81598">
    <property type="protein sequence ID" value="AAB36147.1"/>
    <property type="molecule type" value="Genomic_DNA"/>
</dbReference>
<dbReference type="EMBL" id="CM003143">
    <property type="protein sequence ID" value="KIS70247.1"/>
    <property type="molecule type" value="Genomic_DNA"/>
</dbReference>
<dbReference type="PIR" id="S59499">
    <property type="entry name" value="S59499"/>
</dbReference>
<dbReference type="RefSeq" id="XP_011388317.1">
    <property type="nucleotide sequence ID" value="XM_011390015.1"/>
</dbReference>
<dbReference type="SMR" id="P54424"/>
<dbReference type="STRING" id="237631.P54424"/>
<dbReference type="CAZy" id="GH45">
    <property type="family name" value="Glycoside Hydrolase Family 45"/>
</dbReference>
<dbReference type="GlyCosmos" id="P54424">
    <property type="glycosylation" value="1 site, No reported glycans"/>
</dbReference>
<dbReference type="EnsemblFungi" id="KIS70247">
    <property type="protein sequence ID" value="KIS70247"/>
    <property type="gene ID" value="UMAG_06332"/>
</dbReference>
<dbReference type="GeneID" id="23565950"/>
<dbReference type="KEGG" id="uma:UMAG_06332"/>
<dbReference type="VEuPathDB" id="FungiDB:UMAG_06332"/>
<dbReference type="eggNOG" id="ENOG502QTGS">
    <property type="taxonomic scope" value="Eukaryota"/>
</dbReference>
<dbReference type="HOGENOM" id="CLU_045022_0_0_1"/>
<dbReference type="InParanoid" id="P54424"/>
<dbReference type="OMA" id="MIVQASN"/>
<dbReference type="OrthoDB" id="10035502at2759"/>
<dbReference type="BioCyc" id="MetaCyc:MONOMER-17192"/>
<dbReference type="Proteomes" id="UP000000561">
    <property type="component" value="Chromosome 4"/>
</dbReference>
<dbReference type="GO" id="GO:0005576">
    <property type="term" value="C:extracellular region"/>
    <property type="evidence" value="ECO:0007669"/>
    <property type="project" value="UniProtKB-SubCell"/>
</dbReference>
<dbReference type="GO" id="GO:0008810">
    <property type="term" value="F:cellulase activity"/>
    <property type="evidence" value="ECO:0007669"/>
    <property type="project" value="UniProtKB-EC"/>
</dbReference>
<dbReference type="GO" id="GO:0030245">
    <property type="term" value="P:cellulose catabolic process"/>
    <property type="evidence" value="ECO:0007669"/>
    <property type="project" value="UniProtKB-KW"/>
</dbReference>
<dbReference type="Gene3D" id="2.40.40.10">
    <property type="entry name" value="RlpA-like domain"/>
    <property type="match status" value="1"/>
</dbReference>
<dbReference type="InterPro" id="IPR052288">
    <property type="entry name" value="GH45_Enzymes"/>
</dbReference>
<dbReference type="InterPro" id="IPR000334">
    <property type="entry name" value="Glyco_hydro_45"/>
</dbReference>
<dbReference type="InterPro" id="IPR036908">
    <property type="entry name" value="RlpA-like_sf"/>
</dbReference>
<dbReference type="PANTHER" id="PTHR39730">
    <property type="entry name" value="ENDOGLUCANASE 1"/>
    <property type="match status" value="1"/>
</dbReference>
<dbReference type="PANTHER" id="PTHR39730:SF1">
    <property type="entry name" value="ENDOGLUCANASE 1"/>
    <property type="match status" value="1"/>
</dbReference>
<dbReference type="Pfam" id="PF02015">
    <property type="entry name" value="Glyco_hydro_45"/>
    <property type="match status" value="1"/>
</dbReference>
<dbReference type="SUPFAM" id="SSF50685">
    <property type="entry name" value="Barwin-like endoglucanases"/>
    <property type="match status" value="1"/>
</dbReference>
<dbReference type="PROSITE" id="PS01140">
    <property type="entry name" value="GLYCOSYL_HYDROL_F45"/>
    <property type="match status" value="1"/>
</dbReference>
<comment type="catalytic activity">
    <reaction>
        <text>Endohydrolysis of (1-&gt;4)-beta-D-glucosidic linkages in cellulose, lichenin and cereal beta-D-glucans.</text>
        <dbReference type="EC" id="3.2.1.4"/>
    </reaction>
</comment>
<comment type="subcellular location">
    <subcellularLocation>
        <location>Secreted</location>
    </subcellularLocation>
</comment>
<comment type="tissue specificity">
    <text>Hyphal tip.</text>
</comment>
<comment type="developmental stage">
    <text>Expressed in filamentous dikaryon.</text>
</comment>
<comment type="PTM">
    <text>May also be O-glycosylated.</text>
</comment>
<comment type="similarity">
    <text evidence="5">Belongs to the glycosyl hydrolase 45 (cellulase K) family.</text>
</comment>